<geneLocation type="plasmid">
    <name>V503</name>
</geneLocation>
<gene>
    <name type="primary">ermFU</name>
</gene>
<organism>
    <name type="scientific">Bacteroides fragilis</name>
    <dbReference type="NCBI Taxonomy" id="817"/>
    <lineage>
        <taxon>Bacteria</taxon>
        <taxon>Pseudomonadati</taxon>
        <taxon>Bacteroidota</taxon>
        <taxon>Bacteroidia</taxon>
        <taxon>Bacteroidales</taxon>
        <taxon>Bacteroidaceae</taxon>
        <taxon>Bacteroides</taxon>
    </lineage>
</organism>
<comment type="function">
    <text>Involved in erythromycin resistance.</text>
</comment>
<comment type="similarity">
    <text evidence="1">Belongs to the class I-like SAM-binding methyltransferase superfamily. rRNA adenine N(6)-methyltransferase family.</text>
</comment>
<proteinExistence type="inferred from homology"/>
<keyword id="KW-0046">Antibiotic resistance</keyword>
<keyword id="KW-0489">Methyltransferase</keyword>
<keyword id="KW-0614">Plasmid</keyword>
<keyword id="KW-0694">RNA-binding</keyword>
<keyword id="KW-0949">S-adenosyl-L-methionine</keyword>
<keyword id="KW-0808">Transferase</keyword>
<reference key="1">
    <citation type="journal article" date="1991" name="Nucleic Acids Res.">
        <title>Nucleotide sequence of ermFU, a macrolide-lincosamide-streptogramin (MLS) resistance gene encoding an RNA methylase from the conjugal element of Bacteroides fragilis V503.</title>
        <authorList>
            <person name="Halula M."/>
            <person name="Manning S."/>
            <person name="Macrina F.L."/>
        </authorList>
    </citation>
    <scope>NUCLEOTIDE SEQUENCE [GENOMIC DNA]</scope>
</reference>
<feature type="chain" id="PRO_0000101672" description="rRNA adenine N-6-methyltransferase">
    <location>
        <begin position="1"/>
        <end position="266"/>
    </location>
</feature>
<feature type="binding site" evidence="1">
    <location>
        <position position="14"/>
    </location>
    <ligand>
        <name>S-adenosyl-L-methionine</name>
        <dbReference type="ChEBI" id="CHEBI:59789"/>
    </ligand>
</feature>
<feature type="binding site" evidence="1">
    <location>
        <position position="16"/>
    </location>
    <ligand>
        <name>S-adenosyl-L-methionine</name>
        <dbReference type="ChEBI" id="CHEBI:59789"/>
    </ligand>
</feature>
<feature type="binding site" evidence="1">
    <location>
        <position position="41"/>
    </location>
    <ligand>
        <name>S-adenosyl-L-methionine</name>
        <dbReference type="ChEBI" id="CHEBI:59789"/>
    </ligand>
</feature>
<feature type="binding site" evidence="1">
    <location>
        <position position="62"/>
    </location>
    <ligand>
        <name>S-adenosyl-L-methionine</name>
        <dbReference type="ChEBI" id="CHEBI:59789"/>
    </ligand>
</feature>
<feature type="binding site" evidence="1">
    <location>
        <position position="87"/>
    </location>
    <ligand>
        <name>S-adenosyl-L-methionine</name>
        <dbReference type="ChEBI" id="CHEBI:59789"/>
    </ligand>
</feature>
<feature type="binding site" evidence="1">
    <location>
        <position position="103"/>
    </location>
    <ligand>
        <name>S-adenosyl-L-methionine</name>
        <dbReference type="ChEBI" id="CHEBI:59789"/>
    </ligand>
</feature>
<evidence type="ECO:0000255" key="1">
    <source>
        <dbReference type="PROSITE-ProRule" id="PRU01026"/>
    </source>
</evidence>
<sequence length="266" mass="30424">MTKKKLPLRFTGQHFTIDKVLIKDAIRQANISNQDTVLDIGAGKGFLTVHLLKIANNVVAIENDTALVEHLRKLFSDARNVQVVGCDFRNFAVPKFPFKVVSNIPYGITSDIFKILMFENLENFLGGSIVLQFEPTQKLFSRKLYNPYTVFYHTFFDLKLVYEVGPESFLPPPTVKSALLNIKRKHLFFDFKIKAKYLAFISCLLEKPDLSVKTALKSIFRKSQVRTISEKFGLNLNAQIVCLSPSQWLNCFLEMLEVVPEKFHPS</sequence>
<protein>
    <recommendedName>
        <fullName>rRNA adenine N-6-methyltransferase</fullName>
        <ecNumber evidence="1">2.1.1.-</ecNumber>
    </recommendedName>
    <alternativeName>
        <fullName>Erythromycin resistance protein</fullName>
    </alternativeName>
    <alternativeName>
        <fullName>Macrolide-lincosamide-streptogramin B resistance protein</fullName>
    </alternativeName>
</protein>
<dbReference type="EC" id="2.1.1.-" evidence="1"/>
<dbReference type="EMBL" id="M62487">
    <property type="protein sequence ID" value="AAA63165.1"/>
    <property type="molecule type" value="Genomic_DNA"/>
</dbReference>
<dbReference type="RefSeq" id="WP_063844771.1">
    <property type="nucleotide sequence ID" value="NG_047823.1"/>
</dbReference>
<dbReference type="SMR" id="Q02607"/>
<dbReference type="GO" id="GO:0005829">
    <property type="term" value="C:cytosol"/>
    <property type="evidence" value="ECO:0007669"/>
    <property type="project" value="TreeGrafter"/>
</dbReference>
<dbReference type="GO" id="GO:0003723">
    <property type="term" value="F:RNA binding"/>
    <property type="evidence" value="ECO:0007669"/>
    <property type="project" value="UniProtKB-KW"/>
</dbReference>
<dbReference type="GO" id="GO:0000179">
    <property type="term" value="F:rRNA (adenine-N6,N6-)-dimethyltransferase activity"/>
    <property type="evidence" value="ECO:0007669"/>
    <property type="project" value="InterPro"/>
</dbReference>
<dbReference type="GO" id="GO:0046677">
    <property type="term" value="P:response to antibiotic"/>
    <property type="evidence" value="ECO:0007669"/>
    <property type="project" value="UniProtKB-KW"/>
</dbReference>
<dbReference type="CDD" id="cd02440">
    <property type="entry name" value="AdoMet_MTases"/>
    <property type="match status" value="1"/>
</dbReference>
<dbReference type="Gene3D" id="1.10.8.100">
    <property type="entry name" value="Ribosomal RNA adenine dimethylase-like, domain 2"/>
    <property type="match status" value="1"/>
</dbReference>
<dbReference type="Gene3D" id="3.40.50.150">
    <property type="entry name" value="Vaccinia Virus protein VP39"/>
    <property type="match status" value="1"/>
</dbReference>
<dbReference type="InterPro" id="IPR001737">
    <property type="entry name" value="KsgA/Erm"/>
</dbReference>
<dbReference type="InterPro" id="IPR023165">
    <property type="entry name" value="rRNA_Ade_diMease-like_C"/>
</dbReference>
<dbReference type="InterPro" id="IPR020596">
    <property type="entry name" value="rRNA_Ade_Mease_Trfase_CS"/>
</dbReference>
<dbReference type="InterPro" id="IPR020598">
    <property type="entry name" value="rRNA_Ade_methylase_Trfase_N"/>
</dbReference>
<dbReference type="InterPro" id="IPR029063">
    <property type="entry name" value="SAM-dependent_MTases_sf"/>
</dbReference>
<dbReference type="NCBIfam" id="NF000499">
    <property type="entry name" value="Erm23S_rRNA_broad"/>
    <property type="match status" value="1"/>
</dbReference>
<dbReference type="NCBIfam" id="NF012223">
    <property type="entry name" value="erm_F_23S_MT"/>
    <property type="match status" value="1"/>
</dbReference>
<dbReference type="PANTHER" id="PTHR11727">
    <property type="entry name" value="DIMETHYLADENOSINE TRANSFERASE"/>
    <property type="match status" value="1"/>
</dbReference>
<dbReference type="PANTHER" id="PTHR11727:SF7">
    <property type="entry name" value="DIMETHYLADENOSINE TRANSFERASE-RELATED"/>
    <property type="match status" value="1"/>
</dbReference>
<dbReference type="Pfam" id="PF00398">
    <property type="entry name" value="RrnaAD"/>
    <property type="match status" value="1"/>
</dbReference>
<dbReference type="SMART" id="SM00650">
    <property type="entry name" value="rADc"/>
    <property type="match status" value="1"/>
</dbReference>
<dbReference type="SUPFAM" id="SSF53335">
    <property type="entry name" value="S-adenosyl-L-methionine-dependent methyltransferases"/>
    <property type="match status" value="1"/>
</dbReference>
<dbReference type="PROSITE" id="PS01131">
    <property type="entry name" value="RRNA_A_DIMETH"/>
    <property type="match status" value="1"/>
</dbReference>
<dbReference type="PROSITE" id="PS51689">
    <property type="entry name" value="SAM_RNA_A_N6_MT"/>
    <property type="match status" value="1"/>
</dbReference>
<name>ERMU_BACFG</name>
<accession>Q02607</accession>